<evidence type="ECO:0000255" key="1"/>
<evidence type="ECO:0000269" key="2">
    <source>
    </source>
</evidence>
<evidence type="ECO:0000305" key="3"/>
<dbReference type="EMBL" id="D50470">
    <property type="protein sequence ID" value="BAA09059.1"/>
    <property type="molecule type" value="mRNA"/>
</dbReference>
<dbReference type="EMBL" id="Z48639">
    <property type="status" value="NOT_ANNOTATED_CDS"/>
    <property type="molecule type" value="Genomic_DNA"/>
</dbReference>
<dbReference type="EMBL" id="BK006946">
    <property type="protein sequence ID" value="DAA10152.1"/>
    <property type="molecule type" value="Genomic_DNA"/>
</dbReference>
<dbReference type="PIR" id="S63624">
    <property type="entry name" value="S63624"/>
</dbReference>
<dbReference type="RefSeq" id="NP_013978.1">
    <property type="nucleotide sequence ID" value="NM_001182758.1"/>
</dbReference>
<dbReference type="BioGRID" id="35430">
    <property type="interactions" value="55"/>
</dbReference>
<dbReference type="FunCoup" id="Q05827">
    <property type="interactions" value="118"/>
</dbReference>
<dbReference type="IntAct" id="Q05827">
    <property type="interactions" value="2"/>
</dbReference>
<dbReference type="STRING" id="4932.YMR251W-A"/>
<dbReference type="PaxDb" id="4932-YMR251W-A"/>
<dbReference type="PeptideAtlas" id="Q05827"/>
<dbReference type="EnsemblFungi" id="YMR251W-A_mRNA">
    <property type="protein sequence ID" value="YMR251W-A"/>
    <property type="gene ID" value="YMR251W-A"/>
</dbReference>
<dbReference type="GeneID" id="855293"/>
<dbReference type="KEGG" id="sce:YMR251W-A"/>
<dbReference type="AGR" id="SGD:S000004864"/>
<dbReference type="SGD" id="S000004864">
    <property type="gene designation" value="HOR7"/>
</dbReference>
<dbReference type="VEuPathDB" id="FungiDB:YMR251W-A"/>
<dbReference type="HOGENOM" id="CLU_209340_2_0_1"/>
<dbReference type="InParanoid" id="Q05827"/>
<dbReference type="BioCyc" id="YEAST:G3O-32928-MONOMER"/>
<dbReference type="BioGRID-ORCS" id="855293">
    <property type="hits" value="3 hits in 10 CRISPR screens"/>
</dbReference>
<dbReference type="PRO" id="PR:Q05827"/>
<dbReference type="Proteomes" id="UP000002311">
    <property type="component" value="Chromosome XIII"/>
</dbReference>
<dbReference type="RNAct" id="Q05827">
    <property type="molecule type" value="protein"/>
</dbReference>
<dbReference type="GO" id="GO:0071944">
    <property type="term" value="C:cell periphery"/>
    <property type="evidence" value="ECO:0007005"/>
    <property type="project" value="SGD"/>
</dbReference>
<dbReference type="GO" id="GO:0005783">
    <property type="term" value="C:endoplasmic reticulum"/>
    <property type="evidence" value="ECO:0007005"/>
    <property type="project" value="SGD"/>
</dbReference>
<dbReference type="GO" id="GO:0000324">
    <property type="term" value="C:fungal-type vacuole"/>
    <property type="evidence" value="ECO:0007005"/>
    <property type="project" value="SGD"/>
</dbReference>
<dbReference type="GO" id="GO:0005886">
    <property type="term" value="C:plasma membrane"/>
    <property type="evidence" value="ECO:0000314"/>
    <property type="project" value="SGD"/>
</dbReference>
<dbReference type="GO" id="GO:0007009">
    <property type="term" value="P:plasma membrane organization"/>
    <property type="evidence" value="ECO:0000315"/>
    <property type="project" value="SGD"/>
</dbReference>
<accession>Q05827</accession>
<accession>D6W078</accession>
<sequence length="59" mass="5573">MKLSQVVVSAVAFTGLVSAANSSNSSSSKNAAQPIAGLNNGKVAGAAGVALAGALAFLI</sequence>
<proteinExistence type="evidence at protein level"/>
<gene>
    <name type="primary">HOR7</name>
    <name type="ordered locus">YMR251W-A</name>
    <name type="ORF">YMR251BW</name>
</gene>
<keyword id="KW-1185">Reference proteome</keyword>
<keyword id="KW-0732">Signal</keyword>
<keyword id="KW-0346">Stress response</keyword>
<organism>
    <name type="scientific">Saccharomyces cerevisiae (strain ATCC 204508 / S288c)</name>
    <name type="common">Baker's yeast</name>
    <dbReference type="NCBI Taxonomy" id="559292"/>
    <lineage>
        <taxon>Eukaryota</taxon>
        <taxon>Fungi</taxon>
        <taxon>Dikarya</taxon>
        <taxon>Ascomycota</taxon>
        <taxon>Saccharomycotina</taxon>
        <taxon>Saccharomycetes</taxon>
        <taxon>Saccharomycetales</taxon>
        <taxon>Saccharomycetaceae</taxon>
        <taxon>Saccharomyces</taxon>
    </lineage>
</organism>
<comment type="induction">
    <text>By osmotic stress.</text>
</comment>
<comment type="miscellaneous">
    <text evidence="2">Present with 6140 molecules/cell in log phase SD medium.</text>
</comment>
<comment type="similarity">
    <text evidence="3">To yeast DDR2.</text>
</comment>
<name>HOR7_YEAST</name>
<protein>
    <recommendedName>
        <fullName>Protein HOR7</fullName>
    </recommendedName>
    <alternativeName>
        <fullName>Protein A0.5</fullName>
    </alternativeName>
</protein>
<reference key="1">
    <citation type="journal article" date="1995" name="Mol. Gen. Genet.">
        <title>Cloning and characterization of seven cDNAs for hyperosmolarity-responsive (HOR) genes of Saccharomyces cerevisiae.</title>
        <authorList>
            <person name="Hirayama T."/>
            <person name="Maeda T."/>
            <person name="Saito H."/>
            <person name="Shinozaki K."/>
        </authorList>
    </citation>
    <scope>NUCLEOTIDE SEQUENCE [MRNA]</scope>
    <source>
        <strain>RS16</strain>
    </source>
</reference>
<reference key="2">
    <citation type="journal article" date="1997" name="Yeast">
        <title>Characterization of two new genes down-regulated by alpha-factor.</title>
        <authorList>
            <person name="Seidel J."/>
            <person name="Tanner W."/>
        </authorList>
    </citation>
    <scope>NUCLEOTIDE SEQUENCE</scope>
</reference>
<reference key="3">
    <citation type="journal article" date="1997" name="Nature">
        <title>The nucleotide sequence of Saccharomyces cerevisiae chromosome XIII.</title>
        <authorList>
            <person name="Bowman S."/>
            <person name="Churcher C.M."/>
            <person name="Badcock K."/>
            <person name="Brown D."/>
            <person name="Chillingworth T."/>
            <person name="Connor R."/>
            <person name="Dedman K."/>
            <person name="Devlin K."/>
            <person name="Gentles S."/>
            <person name="Hamlin N."/>
            <person name="Hunt S."/>
            <person name="Jagels K."/>
            <person name="Lye G."/>
            <person name="Moule S."/>
            <person name="Odell C."/>
            <person name="Pearson D."/>
            <person name="Rajandream M.A."/>
            <person name="Rice P."/>
            <person name="Skelton J."/>
            <person name="Walsh S.V."/>
            <person name="Whitehead S."/>
            <person name="Barrell B.G."/>
        </authorList>
    </citation>
    <scope>NUCLEOTIDE SEQUENCE [LARGE SCALE GENOMIC DNA]</scope>
    <source>
        <strain>ATCC 204508 / S288c</strain>
    </source>
</reference>
<reference key="4">
    <citation type="journal article" date="2014" name="G3 (Bethesda)">
        <title>The reference genome sequence of Saccharomyces cerevisiae: Then and now.</title>
        <authorList>
            <person name="Engel S.R."/>
            <person name="Dietrich F.S."/>
            <person name="Fisk D.G."/>
            <person name="Binkley G."/>
            <person name="Balakrishnan R."/>
            <person name="Costanzo M.C."/>
            <person name="Dwight S.S."/>
            <person name="Hitz B.C."/>
            <person name="Karra K."/>
            <person name="Nash R.S."/>
            <person name="Weng S."/>
            <person name="Wong E.D."/>
            <person name="Lloyd P."/>
            <person name="Skrzypek M.S."/>
            <person name="Miyasato S.R."/>
            <person name="Simison M."/>
            <person name="Cherry J.M."/>
        </authorList>
    </citation>
    <scope>GENOME REANNOTATION</scope>
    <source>
        <strain>ATCC 204508 / S288c</strain>
    </source>
</reference>
<reference key="5">
    <citation type="journal article" date="2003" name="Nature">
        <title>Global analysis of protein expression in yeast.</title>
        <authorList>
            <person name="Ghaemmaghami S."/>
            <person name="Huh W.-K."/>
            <person name="Bower K."/>
            <person name="Howson R.W."/>
            <person name="Belle A."/>
            <person name="Dephoure N."/>
            <person name="O'Shea E.K."/>
            <person name="Weissman J.S."/>
        </authorList>
    </citation>
    <scope>LEVEL OF PROTEIN EXPRESSION [LARGE SCALE ANALYSIS]</scope>
</reference>
<feature type="signal peptide" evidence="1">
    <location>
        <begin position="1"/>
        <end position="19"/>
    </location>
</feature>
<feature type="chain" id="PRO_0000021448" description="Protein HOR7">
    <location>
        <begin position="20"/>
        <end position="59"/>
    </location>
</feature>